<gene>
    <name type="primary">ANXA9</name>
    <name type="synonym">ANX31</name>
</gene>
<name>ANXA9_HUMAN</name>
<evidence type="ECO:0000255" key="1">
    <source>
        <dbReference type="PROSITE-ProRule" id="PRU01245"/>
    </source>
</evidence>
<evidence type="ECO:0000269" key="2">
    <source>
    </source>
</evidence>
<evidence type="ECO:0000269" key="3">
    <source>
    </source>
</evidence>
<evidence type="ECO:0000269" key="4">
    <source ref="5"/>
</evidence>
<evidence type="ECO:0000305" key="5"/>
<organism>
    <name type="scientific">Homo sapiens</name>
    <name type="common">Human</name>
    <dbReference type="NCBI Taxonomy" id="9606"/>
    <lineage>
        <taxon>Eukaryota</taxon>
        <taxon>Metazoa</taxon>
        <taxon>Chordata</taxon>
        <taxon>Craniata</taxon>
        <taxon>Vertebrata</taxon>
        <taxon>Euteleostomi</taxon>
        <taxon>Mammalia</taxon>
        <taxon>Eutheria</taxon>
        <taxon>Euarchontoglires</taxon>
        <taxon>Primates</taxon>
        <taxon>Haplorrhini</taxon>
        <taxon>Catarrhini</taxon>
        <taxon>Hominidae</taxon>
        <taxon>Homo</taxon>
    </lineage>
</organism>
<accession>O76027</accession>
<accession>Q5SZF1</accession>
<accession>Q6FI55</accession>
<accession>Q9BS00</accession>
<accession>Q9HBJ6</accession>
<reference key="1">
    <citation type="journal article" date="1998" name="FEBS Lett.">
        <title>Expression profile and structural divergence of novel human annexin 31.</title>
        <authorList>
            <person name="Morgan R.O."/>
            <person name="Fernandez M.-P."/>
        </authorList>
    </citation>
    <scope>NUCLEOTIDE SEQUENCE [MRNA]</scope>
    <scope>VARIANT GLY-166</scope>
    <source>
        <tissue>Liver</tissue>
        <tissue>Spleen</tissue>
    </source>
</reference>
<reference key="2">
    <citation type="journal article" date="2000" name="J. Biol. Chem.">
        <title>Pemphigus vulgaris antibody identifies pemphaxin. A novel keratinocyte annexin-like molecule binding acetylcholine.</title>
        <authorList>
            <person name="Nguyen V.T."/>
            <person name="Ndoye A."/>
            <person name="Grando S.A."/>
        </authorList>
    </citation>
    <scope>NUCLEOTIDE SEQUENCE [MRNA]</scope>
    <scope>VARIANT GLY-166</scope>
    <scope>TISSUE SPECIFICITY</scope>
    <scope>FUNCTION</scope>
    <scope>SUBUNIT</scope>
    <scope>IDENTIFICATION AS AN AUTOANTIGEN IN PV</scope>
</reference>
<reference key="3">
    <citation type="journal article" date="2006" name="Nature">
        <title>The DNA sequence and biological annotation of human chromosome 1.</title>
        <authorList>
            <person name="Gregory S.G."/>
            <person name="Barlow K.F."/>
            <person name="McLay K.E."/>
            <person name="Kaul R."/>
            <person name="Swarbreck D."/>
            <person name="Dunham A."/>
            <person name="Scott C.E."/>
            <person name="Howe K.L."/>
            <person name="Woodfine K."/>
            <person name="Spencer C.C.A."/>
            <person name="Jones M.C."/>
            <person name="Gillson C."/>
            <person name="Searle S."/>
            <person name="Zhou Y."/>
            <person name="Kokocinski F."/>
            <person name="McDonald L."/>
            <person name="Evans R."/>
            <person name="Phillips K."/>
            <person name="Atkinson A."/>
            <person name="Cooper R."/>
            <person name="Jones C."/>
            <person name="Hall R.E."/>
            <person name="Andrews T.D."/>
            <person name="Lloyd C."/>
            <person name="Ainscough R."/>
            <person name="Almeida J.P."/>
            <person name="Ambrose K.D."/>
            <person name="Anderson F."/>
            <person name="Andrew R.W."/>
            <person name="Ashwell R.I.S."/>
            <person name="Aubin K."/>
            <person name="Babbage A.K."/>
            <person name="Bagguley C.L."/>
            <person name="Bailey J."/>
            <person name="Beasley H."/>
            <person name="Bethel G."/>
            <person name="Bird C.P."/>
            <person name="Bray-Allen S."/>
            <person name="Brown J.Y."/>
            <person name="Brown A.J."/>
            <person name="Buckley D."/>
            <person name="Burton J."/>
            <person name="Bye J."/>
            <person name="Carder C."/>
            <person name="Chapman J.C."/>
            <person name="Clark S.Y."/>
            <person name="Clarke G."/>
            <person name="Clee C."/>
            <person name="Cobley V."/>
            <person name="Collier R.E."/>
            <person name="Corby N."/>
            <person name="Coville G.J."/>
            <person name="Davies J."/>
            <person name="Deadman R."/>
            <person name="Dunn M."/>
            <person name="Earthrowl M."/>
            <person name="Ellington A.G."/>
            <person name="Errington H."/>
            <person name="Frankish A."/>
            <person name="Frankland J."/>
            <person name="French L."/>
            <person name="Garner P."/>
            <person name="Garnett J."/>
            <person name="Gay L."/>
            <person name="Ghori M.R.J."/>
            <person name="Gibson R."/>
            <person name="Gilby L.M."/>
            <person name="Gillett W."/>
            <person name="Glithero R.J."/>
            <person name="Grafham D.V."/>
            <person name="Griffiths C."/>
            <person name="Griffiths-Jones S."/>
            <person name="Grocock R."/>
            <person name="Hammond S."/>
            <person name="Harrison E.S.I."/>
            <person name="Hart E."/>
            <person name="Haugen E."/>
            <person name="Heath P.D."/>
            <person name="Holmes S."/>
            <person name="Holt K."/>
            <person name="Howden P.J."/>
            <person name="Hunt A.R."/>
            <person name="Hunt S.E."/>
            <person name="Hunter G."/>
            <person name="Isherwood J."/>
            <person name="James R."/>
            <person name="Johnson C."/>
            <person name="Johnson D."/>
            <person name="Joy A."/>
            <person name="Kay M."/>
            <person name="Kershaw J.K."/>
            <person name="Kibukawa M."/>
            <person name="Kimberley A.M."/>
            <person name="King A."/>
            <person name="Knights A.J."/>
            <person name="Lad H."/>
            <person name="Laird G."/>
            <person name="Lawlor S."/>
            <person name="Leongamornlert D.A."/>
            <person name="Lloyd D.M."/>
            <person name="Loveland J."/>
            <person name="Lovell J."/>
            <person name="Lush M.J."/>
            <person name="Lyne R."/>
            <person name="Martin S."/>
            <person name="Mashreghi-Mohammadi M."/>
            <person name="Matthews L."/>
            <person name="Matthews N.S.W."/>
            <person name="McLaren S."/>
            <person name="Milne S."/>
            <person name="Mistry S."/>
            <person name="Moore M.J.F."/>
            <person name="Nickerson T."/>
            <person name="O'Dell C.N."/>
            <person name="Oliver K."/>
            <person name="Palmeiri A."/>
            <person name="Palmer S.A."/>
            <person name="Parker A."/>
            <person name="Patel D."/>
            <person name="Pearce A.V."/>
            <person name="Peck A.I."/>
            <person name="Pelan S."/>
            <person name="Phelps K."/>
            <person name="Phillimore B.J."/>
            <person name="Plumb R."/>
            <person name="Rajan J."/>
            <person name="Raymond C."/>
            <person name="Rouse G."/>
            <person name="Saenphimmachak C."/>
            <person name="Sehra H.K."/>
            <person name="Sheridan E."/>
            <person name="Shownkeen R."/>
            <person name="Sims S."/>
            <person name="Skuce C.D."/>
            <person name="Smith M."/>
            <person name="Steward C."/>
            <person name="Subramanian S."/>
            <person name="Sycamore N."/>
            <person name="Tracey A."/>
            <person name="Tromans A."/>
            <person name="Van Helmond Z."/>
            <person name="Wall M."/>
            <person name="Wallis J.M."/>
            <person name="White S."/>
            <person name="Whitehead S.L."/>
            <person name="Wilkinson J.E."/>
            <person name="Willey D.L."/>
            <person name="Williams H."/>
            <person name="Wilming L."/>
            <person name="Wray P.W."/>
            <person name="Wu Z."/>
            <person name="Coulson A."/>
            <person name="Vaudin M."/>
            <person name="Sulston J.E."/>
            <person name="Durbin R.M."/>
            <person name="Hubbard T."/>
            <person name="Wooster R."/>
            <person name="Dunham I."/>
            <person name="Carter N.P."/>
            <person name="McVean G."/>
            <person name="Ross M.T."/>
            <person name="Harrow J."/>
            <person name="Olson M.V."/>
            <person name="Beck S."/>
            <person name="Rogers J."/>
            <person name="Bentley D.R."/>
        </authorList>
    </citation>
    <scope>NUCLEOTIDE SEQUENCE [LARGE SCALE GENOMIC DNA]</scope>
</reference>
<reference key="4">
    <citation type="journal article" date="2004" name="Genome Res.">
        <title>The status, quality, and expansion of the NIH full-length cDNA project: the Mammalian Gene Collection (MGC).</title>
        <authorList>
            <consortium name="The MGC Project Team"/>
        </authorList>
    </citation>
    <scope>NUCLEOTIDE SEQUENCE [LARGE SCALE MRNA]</scope>
    <source>
        <tissue>Colon</tissue>
    </source>
</reference>
<reference key="5">
    <citation type="submission" date="2004-06" db="EMBL/GenBank/DDBJ databases">
        <title>Cloning of human full open reading frames in Gateway(TM) system entry vector (pDONR201).</title>
        <authorList>
            <person name="Halleck A."/>
            <person name="Ebert L."/>
            <person name="Mkoundinya M."/>
            <person name="Schick M."/>
            <person name="Eisenstein S."/>
            <person name="Neubert P."/>
            <person name="Kstrang K."/>
            <person name="Schatten R."/>
            <person name="Shen B."/>
            <person name="Henze S."/>
            <person name="Mar W."/>
            <person name="Korn B."/>
            <person name="Zuo D."/>
            <person name="Hu Y."/>
            <person name="LaBaer J."/>
        </authorList>
    </citation>
    <scope>NUCLEOTIDE SEQUENCE [LARGE SCALE MRNA] OF 8-345</scope>
    <scope>VARIANT GLY-166</scope>
</reference>
<reference key="6">
    <citation type="journal article" date="2014" name="J. Proteomics">
        <title>An enzyme assisted RP-RPLC approach for in-depth analysis of human liver phosphoproteome.</title>
        <authorList>
            <person name="Bian Y."/>
            <person name="Song C."/>
            <person name="Cheng K."/>
            <person name="Dong M."/>
            <person name="Wang F."/>
            <person name="Huang J."/>
            <person name="Sun D."/>
            <person name="Wang L."/>
            <person name="Ye M."/>
            <person name="Zou H."/>
        </authorList>
    </citation>
    <scope>IDENTIFICATION BY MASS SPECTROMETRY [LARGE SCALE ANALYSIS]</scope>
    <source>
        <tissue>Liver</tissue>
    </source>
</reference>
<proteinExistence type="evidence at protein level"/>
<protein>
    <recommendedName>
        <fullName>Annexin A9</fullName>
    </recommendedName>
    <alternativeName>
        <fullName>Annexin XXXI</fullName>
    </alternativeName>
    <alternativeName>
        <fullName>Annexin-31</fullName>
    </alternativeName>
    <alternativeName>
        <fullName>Annexin-9</fullName>
    </alternativeName>
    <alternativeName>
        <fullName>Pemphaxin</fullName>
    </alternativeName>
</protein>
<sequence>MSVTGGKMAPSLTQEILSHLGLASKTAAWGTLGTLRTFLNFSVDKDAQRLLRAITGQGVDRSAIVDVLTNRSREQRQLISRNFQERTQQDLMKSLQAALSGNLERIVMALLQPTAQFDAQELRTALKASDSAVDVAIEILATRTPPQLQECLAVYKHNFQVEAVDDITSETSGILQDLLLALAKGGRDSYSGIIDYNLAEQDVQALQRAEGPSREETWVPVFTQRNPEHLIRVFDQYQRSTGQELEEAVQNRFHGDAQVALLGLASVIKNTPLYFADKLHQALQETEPNYQVLIRILISRCETDLLSIRAEFRKKFGKSLYSSLQDAVKGDCQSALLALCRAEDM</sequence>
<dbReference type="EMBL" id="AJ009985">
    <property type="protein sequence ID" value="CAA08933.1"/>
    <property type="status" value="ALT_FRAME"/>
    <property type="molecule type" value="mRNA"/>
</dbReference>
<dbReference type="EMBL" id="AF230929">
    <property type="protein sequence ID" value="AAG16780.1"/>
    <property type="molecule type" value="mRNA"/>
</dbReference>
<dbReference type="EMBL" id="AL590133">
    <property type="status" value="NOT_ANNOTATED_CDS"/>
    <property type="molecule type" value="Genomic_DNA"/>
</dbReference>
<dbReference type="EMBL" id="BC005830">
    <property type="protein sequence ID" value="AAH05830.2"/>
    <property type="status" value="ALT_INIT"/>
    <property type="molecule type" value="mRNA"/>
</dbReference>
<dbReference type="EMBL" id="CR536481">
    <property type="protein sequence ID" value="CAG38720.1"/>
    <property type="molecule type" value="mRNA"/>
</dbReference>
<dbReference type="CCDS" id="CCDS975.2"/>
<dbReference type="RefSeq" id="NP_003559.2">
    <property type="nucleotide sequence ID" value="NM_003568.3"/>
</dbReference>
<dbReference type="RefSeq" id="XP_047287942.1">
    <property type="nucleotide sequence ID" value="XM_047431986.1"/>
</dbReference>
<dbReference type="RefSeq" id="XP_047287945.1">
    <property type="nucleotide sequence ID" value="XM_047431989.1"/>
</dbReference>
<dbReference type="RefSeq" id="XP_047287947.1">
    <property type="nucleotide sequence ID" value="XM_047431991.1"/>
</dbReference>
<dbReference type="RefSeq" id="XP_047287953.1">
    <property type="nucleotide sequence ID" value="XM_047431997.1"/>
</dbReference>
<dbReference type="RefSeq" id="XP_054195083.1">
    <property type="nucleotide sequence ID" value="XM_054339108.1"/>
</dbReference>
<dbReference type="RefSeq" id="XP_054195084.1">
    <property type="nucleotide sequence ID" value="XM_054339109.1"/>
</dbReference>
<dbReference type="RefSeq" id="XP_054195085.1">
    <property type="nucleotide sequence ID" value="XM_054339110.1"/>
</dbReference>
<dbReference type="RefSeq" id="XP_054195086.1">
    <property type="nucleotide sequence ID" value="XM_054339111.1"/>
</dbReference>
<dbReference type="SMR" id="O76027"/>
<dbReference type="BioGRID" id="114002">
    <property type="interactions" value="48"/>
</dbReference>
<dbReference type="FunCoup" id="O76027">
    <property type="interactions" value="7"/>
</dbReference>
<dbReference type="IntAct" id="O76027">
    <property type="interactions" value="35"/>
</dbReference>
<dbReference type="MINT" id="O76027"/>
<dbReference type="STRING" id="9606.ENSP00000357943"/>
<dbReference type="GlyGen" id="O76027">
    <property type="glycosylation" value="1 site, 1 O-linked glycan (1 site)"/>
</dbReference>
<dbReference type="iPTMnet" id="O76027"/>
<dbReference type="PhosphoSitePlus" id="O76027"/>
<dbReference type="BioMuta" id="ANXA9"/>
<dbReference type="jPOST" id="O76027"/>
<dbReference type="MassIVE" id="O76027"/>
<dbReference type="PaxDb" id="9606-ENSP00000357943"/>
<dbReference type="PeptideAtlas" id="O76027"/>
<dbReference type="ProteomicsDB" id="50350"/>
<dbReference type="Antibodypedia" id="34042">
    <property type="antibodies" value="226 antibodies from 25 providers"/>
</dbReference>
<dbReference type="DNASU" id="8416"/>
<dbReference type="Ensembl" id="ENST00000368947.9">
    <property type="protein sequence ID" value="ENSP00000357943.4"/>
    <property type="gene ID" value="ENSG00000143412.10"/>
</dbReference>
<dbReference type="GeneID" id="8416"/>
<dbReference type="KEGG" id="hsa:8416"/>
<dbReference type="MANE-Select" id="ENST00000368947.9">
    <property type="protein sequence ID" value="ENSP00000357943.4"/>
    <property type="RefSeq nucleotide sequence ID" value="NM_003568.3"/>
    <property type="RefSeq protein sequence ID" value="NP_003559.2"/>
</dbReference>
<dbReference type="UCSC" id="uc001ewa.3">
    <property type="organism name" value="human"/>
</dbReference>
<dbReference type="AGR" id="HGNC:547"/>
<dbReference type="CTD" id="8416"/>
<dbReference type="DisGeNET" id="8416"/>
<dbReference type="GeneCards" id="ANXA9"/>
<dbReference type="HGNC" id="HGNC:547">
    <property type="gene designation" value="ANXA9"/>
</dbReference>
<dbReference type="HPA" id="ENSG00000143412">
    <property type="expression patterns" value="Low tissue specificity"/>
</dbReference>
<dbReference type="MIM" id="603319">
    <property type="type" value="gene"/>
</dbReference>
<dbReference type="neXtProt" id="NX_O76027"/>
<dbReference type="OpenTargets" id="ENSG00000143412"/>
<dbReference type="PharmGKB" id="PA24837"/>
<dbReference type="VEuPathDB" id="HostDB:ENSG00000143412"/>
<dbReference type="eggNOG" id="KOG0819">
    <property type="taxonomic scope" value="Eukaryota"/>
</dbReference>
<dbReference type="GeneTree" id="ENSGT00940000161835"/>
<dbReference type="HOGENOM" id="CLU_025300_0_0_1"/>
<dbReference type="InParanoid" id="O76027"/>
<dbReference type="OMA" id="HNFQVEA"/>
<dbReference type="OrthoDB" id="37886at2759"/>
<dbReference type="PAN-GO" id="O76027">
    <property type="GO annotations" value="13 GO annotations based on evolutionary models"/>
</dbReference>
<dbReference type="PhylomeDB" id="O76027"/>
<dbReference type="TreeFam" id="TF105452"/>
<dbReference type="PathwayCommons" id="O76027"/>
<dbReference type="SignaLink" id="O76027"/>
<dbReference type="BioGRID-ORCS" id="8416">
    <property type="hits" value="31 hits in 1149 CRISPR screens"/>
</dbReference>
<dbReference type="ChiTaRS" id="ANXA9">
    <property type="organism name" value="human"/>
</dbReference>
<dbReference type="GeneWiki" id="ANXA9"/>
<dbReference type="GenomeRNAi" id="8416"/>
<dbReference type="Pharos" id="O76027">
    <property type="development level" value="Tbio"/>
</dbReference>
<dbReference type="PRO" id="PR:O76027"/>
<dbReference type="Proteomes" id="UP000005640">
    <property type="component" value="Chromosome 1"/>
</dbReference>
<dbReference type="RNAct" id="O76027">
    <property type="molecule type" value="protein"/>
</dbReference>
<dbReference type="Bgee" id="ENSG00000143412">
    <property type="expression patterns" value="Expressed in lower esophagus mucosa and 127 other cell types or tissues"/>
</dbReference>
<dbReference type="GO" id="GO:0009986">
    <property type="term" value="C:cell surface"/>
    <property type="evidence" value="ECO:0000314"/>
    <property type="project" value="UniProtKB"/>
</dbReference>
<dbReference type="GO" id="GO:0005737">
    <property type="term" value="C:cytoplasm"/>
    <property type="evidence" value="ECO:0000318"/>
    <property type="project" value="GO_Central"/>
</dbReference>
<dbReference type="GO" id="GO:0005829">
    <property type="term" value="C:cytosol"/>
    <property type="evidence" value="ECO:0000314"/>
    <property type="project" value="UniProtKB"/>
</dbReference>
<dbReference type="GO" id="GO:0005634">
    <property type="term" value="C:nucleus"/>
    <property type="evidence" value="ECO:0000318"/>
    <property type="project" value="GO_Central"/>
</dbReference>
<dbReference type="GO" id="GO:0005886">
    <property type="term" value="C:plasma membrane"/>
    <property type="evidence" value="ECO:0000318"/>
    <property type="project" value="GO_Central"/>
</dbReference>
<dbReference type="GO" id="GO:0045202">
    <property type="term" value="C:synapse"/>
    <property type="evidence" value="ECO:0007669"/>
    <property type="project" value="GOC"/>
</dbReference>
<dbReference type="GO" id="GO:0012506">
    <property type="term" value="C:vesicle membrane"/>
    <property type="evidence" value="ECO:0000318"/>
    <property type="project" value="GO_Central"/>
</dbReference>
<dbReference type="GO" id="GO:0015464">
    <property type="term" value="F:acetylcholine receptor activity"/>
    <property type="evidence" value="ECO:0000314"/>
    <property type="project" value="UniProtKB"/>
</dbReference>
<dbReference type="GO" id="GO:0005509">
    <property type="term" value="F:calcium ion binding"/>
    <property type="evidence" value="ECO:0007669"/>
    <property type="project" value="InterPro"/>
</dbReference>
<dbReference type="GO" id="GO:0005544">
    <property type="term" value="F:calcium-dependent phospholipid binding"/>
    <property type="evidence" value="ECO:0000318"/>
    <property type="project" value="GO_Central"/>
</dbReference>
<dbReference type="GO" id="GO:0001786">
    <property type="term" value="F:phosphatidylserine binding"/>
    <property type="evidence" value="ECO:0000314"/>
    <property type="project" value="UniProtKB"/>
</dbReference>
<dbReference type="GO" id="GO:0005543">
    <property type="term" value="F:phospholipid binding"/>
    <property type="evidence" value="ECO:0000314"/>
    <property type="project" value="UniProtKB"/>
</dbReference>
<dbReference type="GO" id="GO:0098609">
    <property type="term" value="P:cell-cell adhesion"/>
    <property type="evidence" value="ECO:0000314"/>
    <property type="project" value="UniProtKB"/>
</dbReference>
<dbReference type="FunFam" id="1.10.220.10:FF:000001">
    <property type="entry name" value="Annexin"/>
    <property type="match status" value="1"/>
</dbReference>
<dbReference type="FunFam" id="1.10.220.10:FF:000003">
    <property type="entry name" value="Annexin"/>
    <property type="match status" value="1"/>
</dbReference>
<dbReference type="FunFam" id="1.10.220.10:FF:000016">
    <property type="entry name" value="Annexin"/>
    <property type="match status" value="1"/>
</dbReference>
<dbReference type="FunFam" id="1.10.220.10:FF:000017">
    <property type="entry name" value="Annexin"/>
    <property type="match status" value="1"/>
</dbReference>
<dbReference type="Gene3D" id="1.10.220.10">
    <property type="entry name" value="Annexin"/>
    <property type="match status" value="4"/>
</dbReference>
<dbReference type="InterPro" id="IPR001464">
    <property type="entry name" value="Annexin"/>
</dbReference>
<dbReference type="InterPro" id="IPR018502">
    <property type="entry name" value="Annexin_repeat"/>
</dbReference>
<dbReference type="InterPro" id="IPR018252">
    <property type="entry name" value="Annexin_repeat_CS"/>
</dbReference>
<dbReference type="InterPro" id="IPR037104">
    <property type="entry name" value="Annexin_sf"/>
</dbReference>
<dbReference type="InterPro" id="IPR009116">
    <property type="entry name" value="ANX9"/>
</dbReference>
<dbReference type="PANTHER" id="PTHR10502">
    <property type="entry name" value="ANNEXIN"/>
    <property type="match status" value="1"/>
</dbReference>
<dbReference type="PANTHER" id="PTHR10502:SF122">
    <property type="entry name" value="ANNEXIN A9"/>
    <property type="match status" value="1"/>
</dbReference>
<dbReference type="Pfam" id="PF00191">
    <property type="entry name" value="Annexin"/>
    <property type="match status" value="4"/>
</dbReference>
<dbReference type="PRINTS" id="PR00196">
    <property type="entry name" value="ANNEXIN"/>
</dbReference>
<dbReference type="PRINTS" id="PR01812">
    <property type="entry name" value="ANNEXINXXXI"/>
</dbReference>
<dbReference type="SMART" id="SM00335">
    <property type="entry name" value="ANX"/>
    <property type="match status" value="4"/>
</dbReference>
<dbReference type="SUPFAM" id="SSF47874">
    <property type="entry name" value="Annexin"/>
    <property type="match status" value="1"/>
</dbReference>
<dbReference type="PROSITE" id="PS00223">
    <property type="entry name" value="ANNEXIN_1"/>
    <property type="match status" value="1"/>
</dbReference>
<dbReference type="PROSITE" id="PS51897">
    <property type="entry name" value="ANNEXIN_2"/>
    <property type="match status" value="4"/>
</dbReference>
<comment type="function">
    <text evidence="2">Low affinity receptor for acetylcholine known to be targeted by disease-causing pemphigus vulgaris antibodies in keratinocytes.</text>
</comment>
<comment type="subunit">
    <text evidence="2">Homodimer.</text>
</comment>
<comment type="interaction">
    <interactant intactId="EBI-720960">
        <id>O76027</id>
    </interactant>
    <interactant intactId="EBI-368321">
        <id>O60437</id>
        <label>PPL</label>
    </interactant>
    <organismsDiffer>false</organismsDiffer>
    <experiments>7</experiments>
</comment>
<comment type="tissue specificity">
    <text evidence="2">Expressed in the stratified squamous skin epithelium, but not in epithelia of other types (at protein level).</text>
</comment>
<comment type="similarity">
    <text evidence="1 5">Belongs to the annexin family.</text>
</comment>
<comment type="sequence caution" evidence="5">
    <conflict type="erroneous initiation">
        <sequence resource="EMBL-CDS" id="AAH05830"/>
    </conflict>
</comment>
<comment type="sequence caution" evidence="5">
    <conflict type="frameshift">
        <sequence resource="EMBL-CDS" id="CAA08933"/>
    </conflict>
</comment>
<keyword id="KW-0041">Annexin</keyword>
<keyword id="KW-1267">Proteomics identification</keyword>
<keyword id="KW-0675">Receptor</keyword>
<keyword id="KW-1185">Reference proteome</keyword>
<keyword id="KW-0677">Repeat</keyword>
<feature type="chain" id="PRO_0000067505" description="Annexin A9">
    <location>
        <begin position="1"/>
        <end position="345"/>
    </location>
</feature>
<feature type="repeat" description="Annexin 1" evidence="1">
    <location>
        <begin position="41"/>
        <end position="112"/>
    </location>
</feature>
<feature type="repeat" description="Annexin 2" evidence="1">
    <location>
        <begin position="113"/>
        <end position="184"/>
    </location>
</feature>
<feature type="repeat" description="Annexin 3" evidence="1">
    <location>
        <begin position="197"/>
        <end position="266"/>
    </location>
</feature>
<feature type="repeat" description="Annexin 4" evidence="1">
    <location>
        <begin position="270"/>
        <end position="341"/>
    </location>
</feature>
<feature type="sequence variant" id="VAR_048255" description="In dbSNP:rs16832595.">
    <original>A</original>
    <variation>T</variation>
    <location>
        <position position="28"/>
    </location>
</feature>
<feature type="sequence variant" id="VAR_048256" description="In dbSNP:rs7536645.">
    <original>T</original>
    <variation>A</variation>
    <location>
        <position position="114"/>
    </location>
</feature>
<feature type="sequence variant" id="VAR_048257" description="In dbSNP:rs16832602.">
    <original>A</original>
    <variation>T</variation>
    <location>
        <position position="119"/>
    </location>
</feature>
<feature type="sequence variant" id="VAR_022814" description="In dbSNP:rs267733." evidence="2 3 4">
    <original>D</original>
    <variation>G</variation>
    <location>
        <position position="166"/>
    </location>
</feature>
<feature type="sequence variant" id="VAR_031212" description="In dbSNP:rs775255778.">
    <original>R</original>
    <variation>Q</variation>
    <location>
        <position position="225"/>
    </location>
</feature>
<feature type="sequence variant" id="VAR_048258" description="In dbSNP:rs7542365.">
    <original>R</original>
    <variation>Q</variation>
    <location>
        <position position="232"/>
    </location>
</feature>